<keyword id="KW-0007">Acetylation</keyword>
<keyword id="KW-0025">Alternative splicing</keyword>
<keyword id="KW-0143">Chaperone</keyword>
<keyword id="KW-0968">Cytoplasmic vesicle</keyword>
<keyword id="KW-0225">Disease variant</keyword>
<keyword id="KW-0378">Hydrolase</keyword>
<keyword id="KW-0523">Neurodegeneration</keyword>
<keyword id="KW-0907">Parkinson disease</keyword>
<keyword id="KW-0908">Parkinsonism</keyword>
<keyword id="KW-0597">Phosphoprotein</keyword>
<keyword id="KW-0904">Protein phosphatase</keyword>
<keyword id="KW-1267">Proteomics identification</keyword>
<keyword id="KW-1185">Reference proteome</keyword>
<keyword id="KW-0677">Repeat</keyword>
<keyword id="KW-0729">SH3-binding</keyword>
<evidence type="ECO:0000250" key="1">
    <source>
        <dbReference type="UniProtKB" id="Q27974"/>
    </source>
</evidence>
<evidence type="ECO:0000250" key="2">
    <source>
        <dbReference type="UniProtKB" id="Q80TZ3"/>
    </source>
</evidence>
<evidence type="ECO:0000255" key="3"/>
<evidence type="ECO:0000255" key="4">
    <source>
        <dbReference type="PROSITE-ProRule" id="PRU00286"/>
    </source>
</evidence>
<evidence type="ECO:0000255" key="5">
    <source>
        <dbReference type="PROSITE-ProRule" id="PRU00589"/>
    </source>
</evidence>
<evidence type="ECO:0000255" key="6">
    <source>
        <dbReference type="PROSITE-ProRule" id="PRU00590"/>
    </source>
</evidence>
<evidence type="ECO:0000256" key="7">
    <source>
        <dbReference type="SAM" id="MobiDB-lite"/>
    </source>
</evidence>
<evidence type="ECO:0000269" key="8">
    <source>
    </source>
</evidence>
<evidence type="ECO:0000269" key="9">
    <source>
    </source>
</evidence>
<evidence type="ECO:0000269" key="10">
    <source>
    </source>
</evidence>
<evidence type="ECO:0000269" key="11">
    <source>
    </source>
</evidence>
<evidence type="ECO:0000269" key="12">
    <source>
    </source>
</evidence>
<evidence type="ECO:0000269" key="13">
    <source>
    </source>
</evidence>
<evidence type="ECO:0000303" key="14">
    <source>
    </source>
</evidence>
<evidence type="ECO:0000303" key="15">
    <source>
    </source>
</evidence>
<evidence type="ECO:0000303" key="16">
    <source>
    </source>
</evidence>
<evidence type="ECO:0000305" key="17"/>
<evidence type="ECO:0000312" key="18">
    <source>
        <dbReference type="EMBL" id="BAA32318.2"/>
    </source>
</evidence>
<evidence type="ECO:0000312" key="19">
    <source>
        <dbReference type="HGNC" id="HGNC:15469"/>
    </source>
</evidence>
<evidence type="ECO:0007744" key="20">
    <source>
    </source>
</evidence>
<evidence type="ECO:0007744" key="21">
    <source>
    </source>
</evidence>
<evidence type="ECO:0007744" key="22">
    <source>
    </source>
</evidence>
<organism>
    <name type="scientific">Homo sapiens</name>
    <name type="common">Human</name>
    <dbReference type="NCBI Taxonomy" id="9606"/>
    <lineage>
        <taxon>Eukaryota</taxon>
        <taxon>Metazoa</taxon>
        <taxon>Chordata</taxon>
        <taxon>Craniata</taxon>
        <taxon>Vertebrata</taxon>
        <taxon>Euteleostomi</taxon>
        <taxon>Mammalia</taxon>
        <taxon>Eutheria</taxon>
        <taxon>Euarchontoglires</taxon>
        <taxon>Primates</taxon>
        <taxon>Haplorrhini</taxon>
        <taxon>Catarrhini</taxon>
        <taxon>Hominidae</taxon>
        <taxon>Homo</taxon>
    </lineage>
</organism>
<sequence>MKDSENKGASSPDMEPSYGGGLFDMVKGGAGRLFSNLKDNLKDTLKDTSSRVIQSVTSYTKGDLDFTYVTSRIIVMSFPLDNVDIGFRNQVDDIRSFLDSRHLDHYTVYNLSPKSYRTAKFHSRVSECSWPIRQAPSLHNLFAVCRNMYNWLLQNPKNVCVVHCLDGRAASSILVGAMFIFCNLYSTPGPAIRLLYAKRPGIGLSPSHRRYLGYMCDLLADKPYRPHFKPLTIKSITVSPIPFFNKQRNGCRPYCDVLIGETKIYSTCTDFERMKEYRVQDGKIFIPLNITVQGDVVVSMYHLRSTIGSRLQAKVTNTQIFQLQFHTGFIPLDTTVLKFTKPELDACDVPEKYPQLFQVTLDVELQPHDKVIDLTPPWEHYCTKDVNPSILFSSHQEHQDTLALGGQAPIDIPPDNPRHYGQSGFFASLCWQDQKSEKSFCEEDHAALVNQESEQSDDELLTLSSPHGNANGDKPHGVKKPSKKQQEPAAPPPPEDVDLLGLEGSAMSNSFSPPAAPPTNSELLSDLFGGGGAAGPTQAGQSGVEDVFHPSGPASTQSTPRRSATSTSASPTLRVGEGATFDPFGAPSKPSGQDLLGSFLNTSSASSDPFLQPTRSPSPTVHASSTPAVNIQPDVSGGWDWHAKPGGFGMGSKSAATSPTGSSHGTPTHQSKPQTLDPFADLGTLGSSSFASKPTTPTGLGGGFPPLSSPQKASPQPMGGGWQQGGAYNWQQPQPKPQPSMPHSSPQNRPNYNVSFSAMPGGQNERGKGSSNLEGKQKAADFEDLLSGQGFNAHKDKKGPRTIAEMRKEEMAKEMDPEKLKILEWIEGKERNIRALLSTMHTVLWAGETKWKPVGMADLVTPEQVKKVYRKAVLVVHPDKATGQPYEQYAKMIFMELNDAWSEFENQGQKPLY</sequence>
<proteinExistence type="evidence at protein level"/>
<accession>O75061</accession>
<accession>B7Z3V8</accession>
<accession>D3DQ65</accession>
<accession>D3DQ66</accession>
<accession>Q32M66</accession>
<accession>Q4G0K1</accession>
<accession>Q5T614</accession>
<accession>Q5T615</accession>
<protein>
    <recommendedName>
        <fullName evidence="16">Auxilin</fullName>
        <ecNumber evidence="17">3.1.3.-</ecNumber>
    </recommendedName>
    <alternativeName>
        <fullName evidence="19">DnaJ homolog subfamily C member 6</fullName>
    </alternativeName>
</protein>
<reference key="1">
    <citation type="journal article" date="1997" name="DNA Res.">
        <title>Characterization of cDNA clones in size-fractionated cDNA libraries from human brain.</title>
        <authorList>
            <person name="Seki N."/>
            <person name="Ohira M."/>
            <person name="Nagase T."/>
            <person name="Ishikawa K."/>
            <person name="Miyajima N."/>
            <person name="Nakajima D."/>
            <person name="Nomura N."/>
            <person name="Ohara O."/>
        </authorList>
    </citation>
    <scope>NUCLEOTIDE SEQUENCE [LARGE SCALE MRNA] (ISOFORM 1)</scope>
    <source>
        <tissue>Brain</tissue>
    </source>
</reference>
<reference key="2">
    <citation type="journal article" date="2004" name="Nat. Genet.">
        <title>Complete sequencing and characterization of 21,243 full-length human cDNAs.</title>
        <authorList>
            <person name="Ota T."/>
            <person name="Suzuki Y."/>
            <person name="Nishikawa T."/>
            <person name="Otsuki T."/>
            <person name="Sugiyama T."/>
            <person name="Irie R."/>
            <person name="Wakamatsu A."/>
            <person name="Hayashi K."/>
            <person name="Sato H."/>
            <person name="Nagai K."/>
            <person name="Kimura K."/>
            <person name="Makita H."/>
            <person name="Sekine M."/>
            <person name="Obayashi M."/>
            <person name="Nishi T."/>
            <person name="Shibahara T."/>
            <person name="Tanaka T."/>
            <person name="Ishii S."/>
            <person name="Yamamoto J."/>
            <person name="Saito K."/>
            <person name="Kawai Y."/>
            <person name="Isono Y."/>
            <person name="Nakamura Y."/>
            <person name="Nagahari K."/>
            <person name="Murakami K."/>
            <person name="Yasuda T."/>
            <person name="Iwayanagi T."/>
            <person name="Wagatsuma M."/>
            <person name="Shiratori A."/>
            <person name="Sudo H."/>
            <person name="Hosoiri T."/>
            <person name="Kaku Y."/>
            <person name="Kodaira H."/>
            <person name="Kondo H."/>
            <person name="Sugawara M."/>
            <person name="Takahashi M."/>
            <person name="Kanda K."/>
            <person name="Yokoi T."/>
            <person name="Furuya T."/>
            <person name="Kikkawa E."/>
            <person name="Omura Y."/>
            <person name="Abe K."/>
            <person name="Kamihara K."/>
            <person name="Katsuta N."/>
            <person name="Sato K."/>
            <person name="Tanikawa M."/>
            <person name="Yamazaki M."/>
            <person name="Ninomiya K."/>
            <person name="Ishibashi T."/>
            <person name="Yamashita H."/>
            <person name="Murakawa K."/>
            <person name="Fujimori K."/>
            <person name="Tanai H."/>
            <person name="Kimata M."/>
            <person name="Watanabe M."/>
            <person name="Hiraoka S."/>
            <person name="Chiba Y."/>
            <person name="Ishida S."/>
            <person name="Ono Y."/>
            <person name="Takiguchi S."/>
            <person name="Watanabe S."/>
            <person name="Yosida M."/>
            <person name="Hotuta T."/>
            <person name="Kusano J."/>
            <person name="Kanehori K."/>
            <person name="Takahashi-Fujii A."/>
            <person name="Hara H."/>
            <person name="Tanase T.-O."/>
            <person name="Nomura Y."/>
            <person name="Togiya S."/>
            <person name="Komai F."/>
            <person name="Hara R."/>
            <person name="Takeuchi K."/>
            <person name="Arita M."/>
            <person name="Imose N."/>
            <person name="Musashino K."/>
            <person name="Yuuki H."/>
            <person name="Oshima A."/>
            <person name="Sasaki N."/>
            <person name="Aotsuka S."/>
            <person name="Yoshikawa Y."/>
            <person name="Matsunawa H."/>
            <person name="Ichihara T."/>
            <person name="Shiohata N."/>
            <person name="Sano S."/>
            <person name="Moriya S."/>
            <person name="Momiyama H."/>
            <person name="Satoh N."/>
            <person name="Takami S."/>
            <person name="Terashima Y."/>
            <person name="Suzuki O."/>
            <person name="Nakagawa S."/>
            <person name="Senoh A."/>
            <person name="Mizoguchi H."/>
            <person name="Goto Y."/>
            <person name="Shimizu F."/>
            <person name="Wakebe H."/>
            <person name="Hishigaki H."/>
            <person name="Watanabe T."/>
            <person name="Sugiyama A."/>
            <person name="Takemoto M."/>
            <person name="Kawakami B."/>
            <person name="Yamazaki M."/>
            <person name="Watanabe K."/>
            <person name="Kumagai A."/>
            <person name="Itakura S."/>
            <person name="Fukuzumi Y."/>
            <person name="Fujimori Y."/>
            <person name="Komiyama M."/>
            <person name="Tashiro H."/>
            <person name="Tanigami A."/>
            <person name="Fujiwara T."/>
            <person name="Ono T."/>
            <person name="Yamada K."/>
            <person name="Fujii Y."/>
            <person name="Ozaki K."/>
            <person name="Hirao M."/>
            <person name="Ohmori Y."/>
            <person name="Kawabata A."/>
            <person name="Hikiji T."/>
            <person name="Kobatake N."/>
            <person name="Inagaki H."/>
            <person name="Ikema Y."/>
            <person name="Okamoto S."/>
            <person name="Okitani R."/>
            <person name="Kawakami T."/>
            <person name="Noguchi S."/>
            <person name="Itoh T."/>
            <person name="Shigeta K."/>
            <person name="Senba T."/>
            <person name="Matsumura K."/>
            <person name="Nakajima Y."/>
            <person name="Mizuno T."/>
            <person name="Morinaga M."/>
            <person name="Sasaki M."/>
            <person name="Togashi T."/>
            <person name="Oyama M."/>
            <person name="Hata H."/>
            <person name="Watanabe M."/>
            <person name="Komatsu T."/>
            <person name="Mizushima-Sugano J."/>
            <person name="Satoh T."/>
            <person name="Shirai Y."/>
            <person name="Takahashi Y."/>
            <person name="Nakagawa K."/>
            <person name="Okumura K."/>
            <person name="Nagase T."/>
            <person name="Nomura N."/>
            <person name="Kikuchi H."/>
            <person name="Masuho Y."/>
            <person name="Yamashita R."/>
            <person name="Nakai K."/>
            <person name="Yada T."/>
            <person name="Nakamura Y."/>
            <person name="Ohara O."/>
            <person name="Isogai T."/>
            <person name="Sugano S."/>
        </authorList>
    </citation>
    <scope>NUCLEOTIDE SEQUENCE [LARGE SCALE MRNA] (ISOFORM 4)</scope>
    <source>
        <tissue>Thalamus</tissue>
    </source>
</reference>
<reference key="3">
    <citation type="journal article" date="2006" name="Nature">
        <title>The DNA sequence and biological annotation of human chromosome 1.</title>
        <authorList>
            <person name="Gregory S.G."/>
            <person name="Barlow K.F."/>
            <person name="McLay K.E."/>
            <person name="Kaul R."/>
            <person name="Swarbreck D."/>
            <person name="Dunham A."/>
            <person name="Scott C.E."/>
            <person name="Howe K.L."/>
            <person name="Woodfine K."/>
            <person name="Spencer C.C.A."/>
            <person name="Jones M.C."/>
            <person name="Gillson C."/>
            <person name="Searle S."/>
            <person name="Zhou Y."/>
            <person name="Kokocinski F."/>
            <person name="McDonald L."/>
            <person name="Evans R."/>
            <person name="Phillips K."/>
            <person name="Atkinson A."/>
            <person name="Cooper R."/>
            <person name="Jones C."/>
            <person name="Hall R.E."/>
            <person name="Andrews T.D."/>
            <person name="Lloyd C."/>
            <person name="Ainscough R."/>
            <person name="Almeida J.P."/>
            <person name="Ambrose K.D."/>
            <person name="Anderson F."/>
            <person name="Andrew R.W."/>
            <person name="Ashwell R.I.S."/>
            <person name="Aubin K."/>
            <person name="Babbage A.K."/>
            <person name="Bagguley C.L."/>
            <person name="Bailey J."/>
            <person name="Beasley H."/>
            <person name="Bethel G."/>
            <person name="Bird C.P."/>
            <person name="Bray-Allen S."/>
            <person name="Brown J.Y."/>
            <person name="Brown A.J."/>
            <person name="Buckley D."/>
            <person name="Burton J."/>
            <person name="Bye J."/>
            <person name="Carder C."/>
            <person name="Chapman J.C."/>
            <person name="Clark S.Y."/>
            <person name="Clarke G."/>
            <person name="Clee C."/>
            <person name="Cobley V."/>
            <person name="Collier R.E."/>
            <person name="Corby N."/>
            <person name="Coville G.J."/>
            <person name="Davies J."/>
            <person name="Deadman R."/>
            <person name="Dunn M."/>
            <person name="Earthrowl M."/>
            <person name="Ellington A.G."/>
            <person name="Errington H."/>
            <person name="Frankish A."/>
            <person name="Frankland J."/>
            <person name="French L."/>
            <person name="Garner P."/>
            <person name="Garnett J."/>
            <person name="Gay L."/>
            <person name="Ghori M.R.J."/>
            <person name="Gibson R."/>
            <person name="Gilby L.M."/>
            <person name="Gillett W."/>
            <person name="Glithero R.J."/>
            <person name="Grafham D.V."/>
            <person name="Griffiths C."/>
            <person name="Griffiths-Jones S."/>
            <person name="Grocock R."/>
            <person name="Hammond S."/>
            <person name="Harrison E.S.I."/>
            <person name="Hart E."/>
            <person name="Haugen E."/>
            <person name="Heath P.D."/>
            <person name="Holmes S."/>
            <person name="Holt K."/>
            <person name="Howden P.J."/>
            <person name="Hunt A.R."/>
            <person name="Hunt S.E."/>
            <person name="Hunter G."/>
            <person name="Isherwood J."/>
            <person name="James R."/>
            <person name="Johnson C."/>
            <person name="Johnson D."/>
            <person name="Joy A."/>
            <person name="Kay M."/>
            <person name="Kershaw J.K."/>
            <person name="Kibukawa M."/>
            <person name="Kimberley A.M."/>
            <person name="King A."/>
            <person name="Knights A.J."/>
            <person name="Lad H."/>
            <person name="Laird G."/>
            <person name="Lawlor S."/>
            <person name="Leongamornlert D.A."/>
            <person name="Lloyd D.M."/>
            <person name="Loveland J."/>
            <person name="Lovell J."/>
            <person name="Lush M.J."/>
            <person name="Lyne R."/>
            <person name="Martin S."/>
            <person name="Mashreghi-Mohammadi M."/>
            <person name="Matthews L."/>
            <person name="Matthews N.S.W."/>
            <person name="McLaren S."/>
            <person name="Milne S."/>
            <person name="Mistry S."/>
            <person name="Moore M.J.F."/>
            <person name="Nickerson T."/>
            <person name="O'Dell C.N."/>
            <person name="Oliver K."/>
            <person name="Palmeiri A."/>
            <person name="Palmer S.A."/>
            <person name="Parker A."/>
            <person name="Patel D."/>
            <person name="Pearce A.V."/>
            <person name="Peck A.I."/>
            <person name="Pelan S."/>
            <person name="Phelps K."/>
            <person name="Phillimore B.J."/>
            <person name="Plumb R."/>
            <person name="Rajan J."/>
            <person name="Raymond C."/>
            <person name="Rouse G."/>
            <person name="Saenphimmachak C."/>
            <person name="Sehra H.K."/>
            <person name="Sheridan E."/>
            <person name="Shownkeen R."/>
            <person name="Sims S."/>
            <person name="Skuce C.D."/>
            <person name="Smith M."/>
            <person name="Steward C."/>
            <person name="Subramanian S."/>
            <person name="Sycamore N."/>
            <person name="Tracey A."/>
            <person name="Tromans A."/>
            <person name="Van Helmond Z."/>
            <person name="Wall M."/>
            <person name="Wallis J.M."/>
            <person name="White S."/>
            <person name="Whitehead S.L."/>
            <person name="Wilkinson J.E."/>
            <person name="Willey D.L."/>
            <person name="Williams H."/>
            <person name="Wilming L."/>
            <person name="Wray P.W."/>
            <person name="Wu Z."/>
            <person name="Coulson A."/>
            <person name="Vaudin M."/>
            <person name="Sulston J.E."/>
            <person name="Durbin R.M."/>
            <person name="Hubbard T."/>
            <person name="Wooster R."/>
            <person name="Dunham I."/>
            <person name="Carter N.P."/>
            <person name="McVean G."/>
            <person name="Ross M.T."/>
            <person name="Harrow J."/>
            <person name="Olson M.V."/>
            <person name="Beck S."/>
            <person name="Rogers J."/>
            <person name="Bentley D.R."/>
        </authorList>
    </citation>
    <scope>NUCLEOTIDE SEQUENCE [LARGE SCALE GENOMIC DNA]</scope>
</reference>
<reference key="4">
    <citation type="submission" date="2005-09" db="EMBL/GenBank/DDBJ databases">
        <authorList>
            <person name="Mural R.J."/>
            <person name="Istrail S."/>
            <person name="Sutton G.G."/>
            <person name="Florea L."/>
            <person name="Halpern A.L."/>
            <person name="Mobarry C.M."/>
            <person name="Lippert R."/>
            <person name="Walenz B."/>
            <person name="Shatkay H."/>
            <person name="Dew I."/>
            <person name="Miller J.R."/>
            <person name="Flanigan M.J."/>
            <person name="Edwards N.J."/>
            <person name="Bolanos R."/>
            <person name="Fasulo D."/>
            <person name="Halldorsson B.V."/>
            <person name="Hannenhalli S."/>
            <person name="Turner R."/>
            <person name="Yooseph S."/>
            <person name="Lu F."/>
            <person name="Nusskern D.R."/>
            <person name="Shue B.C."/>
            <person name="Zheng X.H."/>
            <person name="Zhong F."/>
            <person name="Delcher A.L."/>
            <person name="Huson D.H."/>
            <person name="Kravitz S.A."/>
            <person name="Mouchard L."/>
            <person name="Reinert K."/>
            <person name="Remington K.A."/>
            <person name="Clark A.G."/>
            <person name="Waterman M.S."/>
            <person name="Eichler E.E."/>
            <person name="Adams M.D."/>
            <person name="Hunkapiller M.W."/>
            <person name="Myers E.W."/>
            <person name="Venter J.C."/>
        </authorList>
    </citation>
    <scope>NUCLEOTIDE SEQUENCE [LARGE SCALE GENOMIC DNA]</scope>
</reference>
<reference key="5">
    <citation type="journal article" date="2004" name="Genome Res.">
        <title>The status, quality, and expansion of the NIH full-length cDNA project: the Mammalian Gene Collection (MGC).</title>
        <authorList>
            <consortium name="The MGC Project Team"/>
        </authorList>
    </citation>
    <scope>NUCLEOTIDE SEQUENCE [LARGE SCALE MRNA] (ISOFORMS 2 AND 3)</scope>
    <source>
        <tissue>Brain</tissue>
    </source>
</reference>
<reference key="6">
    <citation type="journal article" date="2008" name="Proc. Natl. Acad. Sci. U.S.A.">
        <title>A quantitative atlas of mitotic phosphorylation.</title>
        <authorList>
            <person name="Dephoure N."/>
            <person name="Zhou C."/>
            <person name="Villen J."/>
            <person name="Beausoleil S.A."/>
            <person name="Bakalarski C.E."/>
            <person name="Elledge S.J."/>
            <person name="Gygi S.P."/>
        </authorList>
    </citation>
    <scope>PHOSPHORYLATION [LARGE SCALE ANALYSIS] AT SER-563 AND SER-570</scope>
    <scope>IDENTIFICATION BY MASS SPECTROMETRY [LARGE SCALE ANALYSIS]</scope>
    <source>
        <tissue>Cervix carcinoma</tissue>
    </source>
</reference>
<reference key="7">
    <citation type="journal article" date="2008" name="Traffic">
        <title>Auxilin depletion causes self-assembly of clathrin into membraneless cages in vivo.</title>
        <authorList>
            <person name="Hirst J."/>
            <person name="Sahlender D.A."/>
            <person name="Li S."/>
            <person name="Lubben N.B."/>
            <person name="Borner G.H."/>
            <person name="Robinson M.S."/>
        </authorList>
    </citation>
    <scope>FUNCTION</scope>
</reference>
<reference key="8">
    <citation type="journal article" date="2009" name="Anal. Chem.">
        <title>Lys-N and trypsin cover complementary parts of the phosphoproteome in a refined SCX-based approach.</title>
        <authorList>
            <person name="Gauci S."/>
            <person name="Helbig A.O."/>
            <person name="Slijper M."/>
            <person name="Krijgsveld J."/>
            <person name="Heck A.J."/>
            <person name="Mohammed S."/>
        </authorList>
    </citation>
    <scope>IDENTIFICATION BY MASS SPECTROMETRY [LARGE SCALE ANALYSIS]</scope>
</reference>
<reference key="9">
    <citation type="journal article" date="2012" name="PLoS ONE">
        <title>A deleterious mutation in DNAJC6 encoding the neuronal-specific clathrin-uncoating co-chaperone auxilin, is associated with juvenile parkinsonism.</title>
        <authorList>
            <person name="Edvardson S."/>
            <person name="Cinnamon Y."/>
            <person name="Ta-Shma A."/>
            <person name="Shaag A."/>
            <person name="Yim Y.I."/>
            <person name="Zenvirt S."/>
            <person name="Jalas C."/>
            <person name="Lesage S."/>
            <person name="Brice A."/>
            <person name="Taraboulos A."/>
            <person name="Kaestner K.H."/>
            <person name="Greene L.E."/>
            <person name="Elpeleg O."/>
        </authorList>
    </citation>
    <scope>INVOLVEMENT IN PARK19A</scope>
</reference>
<reference key="10">
    <citation type="journal article" date="2012" name="Proc. Natl. Acad. Sci. U.S.A.">
        <title>N-terminal acetylome analyses and functional insights of the N-terminal acetyltransferase NatB.</title>
        <authorList>
            <person name="Van Damme P."/>
            <person name="Lasa M."/>
            <person name="Polevoda B."/>
            <person name="Gazquez C."/>
            <person name="Elosegui-Artola A."/>
            <person name="Kim D.S."/>
            <person name="De Juan-Pardo E."/>
            <person name="Demeyer K."/>
            <person name="Hole K."/>
            <person name="Larrea E."/>
            <person name="Timmerman E."/>
            <person name="Prieto J."/>
            <person name="Arnesen T."/>
            <person name="Sherman F."/>
            <person name="Gevaert K."/>
            <person name="Aldabe R."/>
        </authorList>
    </citation>
    <scope>ACETYLATION [LARGE SCALE ANALYSIS] AT MET-1 (ISOFORMS 3 AND 4)</scope>
    <scope>IDENTIFICATION BY MASS SPECTROMETRY [LARGE SCALE ANALYSIS]</scope>
</reference>
<reference key="11">
    <citation type="journal article" date="2013" name="J. Proteome Res.">
        <title>Toward a comprehensive characterization of a human cancer cell phosphoproteome.</title>
        <authorList>
            <person name="Zhou H."/>
            <person name="Di Palma S."/>
            <person name="Preisinger C."/>
            <person name="Peng M."/>
            <person name="Polat A.N."/>
            <person name="Heck A.J."/>
            <person name="Mohammed S."/>
        </authorList>
    </citation>
    <scope>PHOSPHORYLATION [LARGE SCALE ANALYSIS] AT SER-112 AND SER-570</scope>
    <scope>IDENTIFICATION BY MASS SPECTROMETRY [LARGE SCALE ANALYSIS]</scope>
    <source>
        <tissue>Cervix carcinoma</tissue>
        <tissue>Erythroleukemia</tissue>
    </source>
</reference>
<reference key="12">
    <citation type="journal article" date="2013" name="Parkinsonism Relat. Disord.">
        <title>DNAJC6 is responsible for juvenile parkinsonism with phenotypic variability.</title>
        <authorList>
            <person name="Koroglu C."/>
            <person name="Baysal L."/>
            <person name="Cetinkaya M."/>
            <person name="Karasoy H."/>
            <person name="Tolun A."/>
        </authorList>
    </citation>
    <scope>TISSUE SPECIFICITY</scope>
    <scope>INVOLVEMENT IN PARK19A</scope>
</reference>
<reference key="13">
    <citation type="journal article" date="2014" name="J. Proteomics">
        <title>An enzyme assisted RP-RPLC approach for in-depth analysis of human liver phosphoproteome.</title>
        <authorList>
            <person name="Bian Y."/>
            <person name="Song C."/>
            <person name="Cheng K."/>
            <person name="Dong M."/>
            <person name="Wang F."/>
            <person name="Huang J."/>
            <person name="Sun D."/>
            <person name="Wang L."/>
            <person name="Ye M."/>
            <person name="Zou H."/>
        </authorList>
    </citation>
    <scope>IDENTIFICATION BY MASS SPECTROMETRY [LARGE SCALE ANALYSIS]</scope>
    <source>
        <tissue>Liver</tissue>
    </source>
</reference>
<reference key="14">
    <citation type="journal article" date="2018" name="Proc. Natl. Acad. Sci. U.S.A.">
        <title>LRRK2 phosphorylation of auxilin mediates synaptic defects in dopaminergic neurons from patients with Parkinson's disease.</title>
        <authorList>
            <person name="Nguyen M."/>
            <person name="Krainc D."/>
        </authorList>
    </citation>
    <scope>IDENTIFICATION BY MASS SPECTROMETRY</scope>
    <scope>PHOSPHORYLATION AT SER-570</scope>
    <scope>INTERACTION WITH CLTC</scope>
    <scope>MUTAGENESIS OF SER-570</scope>
    <scope>PTM</scope>
</reference>
<reference key="15">
    <citation type="journal article" date="2016" name="Ann. Neurol.">
        <title>DNAJC6 mutations associated with early-onset Parkinson's disease.</title>
        <authorList>
            <consortium name="International Parkinsonism Genetics Network"/>
            <person name="Olgiati S."/>
            <person name="Quadri M."/>
            <person name="Fang M."/>
            <person name="Rood J.P."/>
            <person name="Saute J.A."/>
            <person name="Chien H.F."/>
            <person name="Bouwkamp C.G."/>
            <person name="Graafland J."/>
            <person name="Minneboo M."/>
            <person name="Breedveld G.J."/>
            <person name="Zhang J."/>
            <person name="Verheijen F.W."/>
            <person name="Boon A.J."/>
            <person name="Kievit A.J."/>
            <person name="Jardim L.B."/>
            <person name="Mandemakers W."/>
            <person name="Barbosa E.R."/>
            <person name="Rieder C.R."/>
            <person name="Leenders K.L."/>
            <person name="Wang J."/>
            <person name="Bonifati V."/>
        </authorList>
    </citation>
    <scope>INVOLVEMENT IN PARK19B</scope>
    <scope>VARIANT PARK19B GLY-870</scope>
    <scope>VARIANTS LEU-76; PRO-152; VAL-264; SER-441 AND CYS-562</scope>
    <scope>CHARACTERIZATION OF VARIANT PARK19B GLY-870</scope>
</reference>
<reference key="16">
    <citation type="journal article" date="2016" name="Ann. Neurol.">
        <title>A novel nonsense mutation in DNAJC6 expands the phenotype of autosomal-recessive juvenile-onset Parkinson's disease.</title>
        <authorList>
            <person name="Elsayed L.E."/>
            <person name="Drouet V."/>
            <person name="Usenko T."/>
            <person name="Mohammed I.N."/>
            <person name="Hamed A.A."/>
            <person name="Elseed M.A."/>
            <person name="Salih M.A."/>
            <person name="Koko M.E."/>
            <person name="Mohamed A.Y."/>
            <person name="Siddig R.A."/>
            <person name="Elbashir M.I."/>
            <person name="Ibrahim M.E."/>
            <person name="Durr A."/>
            <person name="Stevanin G."/>
            <person name="Lesage S."/>
            <person name="Ahmed A.E."/>
            <person name="Brice A."/>
        </authorList>
    </citation>
    <scope>INVOLVEMENT IN PARK19A</scope>
</reference>
<comment type="function">
    <text evidence="1 8">May act as a protein phosphatase and/or a lipid phosphatase. Co-chaperone that recruits HSPA8/HSC70 to clathrin-coated vesicles (CCVs) and promotes the ATP-dependent dissociation of clathrin from CCVs and participates in clathrin-mediated endocytosis of synaptic vesicles and their recycling and also in intracellular trafficking (PubMed:18489706). Firstly, binds tightly to the clathrin cages, at a ratio of one DNAJC6 per clathrin triskelion. The HSPA8:ATP complex then binds to the clathrin-auxilin cage, initially at a ratio of one HSPA8 per triskelion leading to ATP hydrolysis stimulation and causing a conformational change in the HSPA8. This cycle is repeated three times to drive to a complex containing the clathrin-auxilin cage associated to three HSPA8:ADP complex. The ATP hydrolysis of the third HSPA8:ATP complex leads to a concerted dismantling of the cage into component triskelia. Then, dissociates from the released triskelia and be recycled to initiate another cycle of HSPA8's recruitment. Also acts during the early steps of clathrin-coated vesicle (CCV) formation through its interaction with the GTP bound form of DNM1 (By similarity).</text>
</comment>
<comment type="subunit">
    <text evidence="1 13">Forms a complex composed of HSPA8, CLTC and DNAJC6. Interacts with HSPA8/HSC70 in an ATP-dependent manner; this interaction stimulates the HSPA8's ATPase activity (By similarity). Interacts with CLTC; this interaction produces a local change in heavy-chain contacts, creating a detectable global distortion of the clathrin coat (PubMed:29735704). Interacts with AP2A2. Interacts with DNM1(GTP-bound form); this interaction allows clathrin-coated vesicle (CCV) formation at the plasma membrane (By similarity).</text>
</comment>
<comment type="subcellular location">
    <subcellularLocation>
        <location evidence="1">Cytoplasmic vesicle</location>
        <location evidence="1">Clathrin-coated vesicle</location>
    </subcellularLocation>
    <text evidence="1">Appears on coated vesicles in successive transient bursts, immediately after the vesicle release from the plasma membrane. Recruitment to clathrin-coated vesicles depends on temporal variations in phosphoinositide composition of clathrin-coated vesicles.</text>
</comment>
<comment type="alternative products">
    <event type="alternative splicing"/>
    <isoform>
        <id>O75061-1</id>
        <name>1</name>
        <sequence type="displayed"/>
    </isoform>
    <isoform>
        <id>O75061-2</id>
        <name>2</name>
        <sequence type="described" ref="VSP_019580"/>
    </isoform>
    <isoform>
        <id>O75061-3</id>
        <name>3</name>
        <sequence type="described" ref="VSP_019579 VSP_019581"/>
    </isoform>
    <isoform>
        <id>O75061-4</id>
        <name>4</name>
        <sequence type="described" ref="VSP_019579"/>
    </isoform>
</comment>
<comment type="tissue specificity">
    <text evidence="10">Expressed in various brain regions, including cerebellum, corpus callosum, cortex, striatum, brainstem, pons, putamen, spinal cord and substantia nigra. Very low expression in non-neural tissues such as leukocytes, liver, adipose tissue, skeletal muscle and bone marrow.</text>
</comment>
<comment type="domain">
    <text evidence="1">The J domain mediates interaction with HSPA8/HSC70 and is required for basket dissociation.</text>
</comment>
<comment type="PTM">
    <text evidence="13">Phosphorylation at Ser-570 modulates its ability to bind CLTC and therefore the synaptic vesicle endocytosis (SVE).</text>
</comment>
<comment type="PTM">
    <text evidence="1">The N-terminus is blocked.</text>
</comment>
<comment type="disease" evidence="9 10 12">
    <disease id="DI-03961">
        <name>Parkinson disease 19A, juvenile-onset</name>
        <acronym>PARK19A</acronym>
        <description>A juvenile form of Parkinson disease, a complex neurodegenerative disorder characterized by bradykinesia, resting tremor, muscular rigidity and postural instability, as well as by a clinically significant response to treatment with levodopa. The pathology involves the loss of dopaminergic neurons in the substantia nigra and the presence of Lewy bodies (intraneuronal accumulations of aggregated proteins), in surviving neurons in various areas of the brain. PARK19A is characterized by onset of parkinsonian symptoms in the first or second decade of life. Some patients may have additional neurologic features, including intellectual disability and seizures.</description>
        <dbReference type="MIM" id="615528"/>
    </disease>
    <text>The disease is caused by variants affecting the gene represented in this entry.</text>
</comment>
<comment type="disease" evidence="11">
    <disease id="DI-04813">
        <name>Parkinson disease 19B, early-onset</name>
        <acronym>PARK19B</acronym>
        <description>An early-onset form of Parkinson disease, a complex neurodegenerative disorder characterized by bradykinesia, resting tremor, muscular rigidity and postural instability, as well as by a clinically significant response to treatment with levodopa. The pathology involves the loss of dopaminergic neurons in the substantia nigra and the presence of Lewy bodies (intraneuronal accumulations of aggregated proteins), in surviving neurons in various areas of the brain. PARK19B is characterized by symptoms onset in the third-to-fifth decade, slow disease progression, and prominent. response to dopaminergic therapies. Inheritance is autosomal recessive.</description>
        <dbReference type="MIM" id="615528"/>
    </disease>
    <text>The disease is caused by variants affecting the gene represented in this entry.</text>
</comment>
<comment type="sequence caution" evidence="17">
    <conflict type="erroneous initiation">
        <sequence resource="EMBL-CDS" id="BAA32318"/>
    </conflict>
    <text>Extended N-terminus.</text>
</comment>
<gene>
    <name evidence="19" type="primary">DNAJC6</name>
    <name evidence="18" type="synonym">KIAA0473</name>
</gene>
<name>AUXI_HUMAN</name>
<dbReference type="EC" id="3.1.3.-" evidence="17"/>
<dbReference type="EMBL" id="AB007942">
    <property type="protein sequence ID" value="BAA32318.2"/>
    <property type="status" value="ALT_INIT"/>
    <property type="molecule type" value="mRNA"/>
</dbReference>
<dbReference type="EMBL" id="AK296408">
    <property type="protein sequence ID" value="BAH12344.1"/>
    <property type="molecule type" value="mRNA"/>
</dbReference>
<dbReference type="EMBL" id="AC119800">
    <property type="status" value="NOT_ANNOTATED_CDS"/>
    <property type="molecule type" value="Genomic_DNA"/>
</dbReference>
<dbReference type="EMBL" id="AL139294">
    <property type="status" value="NOT_ANNOTATED_CDS"/>
    <property type="molecule type" value="Genomic_DNA"/>
</dbReference>
<dbReference type="EMBL" id="AL355487">
    <property type="status" value="NOT_ANNOTATED_CDS"/>
    <property type="molecule type" value="Genomic_DNA"/>
</dbReference>
<dbReference type="EMBL" id="AL356212">
    <property type="status" value="NOT_ANNOTATED_CDS"/>
    <property type="molecule type" value="Genomic_DNA"/>
</dbReference>
<dbReference type="EMBL" id="CH471059">
    <property type="protein sequence ID" value="EAX06533.1"/>
    <property type="molecule type" value="Genomic_DNA"/>
</dbReference>
<dbReference type="EMBL" id="CH471059">
    <property type="protein sequence ID" value="EAX06534.1"/>
    <property type="molecule type" value="Genomic_DNA"/>
</dbReference>
<dbReference type="EMBL" id="CH471059">
    <property type="protein sequence ID" value="EAX06536.1"/>
    <property type="molecule type" value="Genomic_DNA"/>
</dbReference>
<dbReference type="EMBL" id="CH471059">
    <property type="protein sequence ID" value="EAX06537.1"/>
    <property type="molecule type" value="Genomic_DNA"/>
</dbReference>
<dbReference type="EMBL" id="BC051722">
    <property type="protein sequence ID" value="AAH51722.1"/>
    <property type="molecule type" value="mRNA"/>
</dbReference>
<dbReference type="EMBL" id="BC109279">
    <property type="protein sequence ID" value="AAI09280.2"/>
    <property type="molecule type" value="mRNA"/>
</dbReference>
<dbReference type="EMBL" id="BC109280">
    <property type="protein sequence ID" value="AAI09281.2"/>
    <property type="molecule type" value="mRNA"/>
</dbReference>
<dbReference type="CCDS" id="CCDS30739.1">
    <molecule id="O75061-1"/>
</dbReference>
<dbReference type="CCDS" id="CCDS58004.1">
    <molecule id="O75061-2"/>
</dbReference>
<dbReference type="CCDS" id="CCDS58005.1">
    <molecule id="O75061-4"/>
</dbReference>
<dbReference type="RefSeq" id="NP_001243793.1">
    <molecule id="O75061-2"/>
    <property type="nucleotide sequence ID" value="NM_001256864.2"/>
</dbReference>
<dbReference type="RefSeq" id="NP_001243794.1">
    <molecule id="O75061-4"/>
    <property type="nucleotide sequence ID" value="NM_001256865.2"/>
</dbReference>
<dbReference type="RefSeq" id="NP_055602.1">
    <molecule id="O75061-1"/>
    <property type="nucleotide sequence ID" value="NM_014787.4"/>
</dbReference>
<dbReference type="BMRB" id="O75061"/>
<dbReference type="SMR" id="O75061"/>
<dbReference type="BioGRID" id="115167">
    <property type="interactions" value="64"/>
</dbReference>
<dbReference type="FunCoup" id="O75061">
    <property type="interactions" value="1518"/>
</dbReference>
<dbReference type="IntAct" id="O75061">
    <property type="interactions" value="32"/>
</dbReference>
<dbReference type="MINT" id="O75061"/>
<dbReference type="STRING" id="9606.ENSP00000360108"/>
<dbReference type="DEPOD" id="DNAJC6"/>
<dbReference type="GlyGen" id="O75061">
    <property type="glycosylation" value="2 sites"/>
</dbReference>
<dbReference type="iPTMnet" id="O75061"/>
<dbReference type="PhosphoSitePlus" id="O75061"/>
<dbReference type="SwissPalm" id="O75061"/>
<dbReference type="BioMuta" id="DNAJC6"/>
<dbReference type="jPOST" id="O75061"/>
<dbReference type="MassIVE" id="O75061"/>
<dbReference type="PaxDb" id="9606-ENSP00000360108"/>
<dbReference type="PeptideAtlas" id="O75061"/>
<dbReference type="ProteomicsDB" id="12747"/>
<dbReference type="ProteomicsDB" id="49731">
    <molecule id="O75061-1"/>
</dbReference>
<dbReference type="ProteomicsDB" id="49732">
    <molecule id="O75061-2"/>
</dbReference>
<dbReference type="ProteomicsDB" id="49733">
    <molecule id="O75061-3"/>
</dbReference>
<dbReference type="Pumba" id="O75061"/>
<dbReference type="Antibodypedia" id="33368">
    <property type="antibodies" value="129 antibodies from 25 providers"/>
</dbReference>
<dbReference type="DNASU" id="9829"/>
<dbReference type="Ensembl" id="ENST00000263441.11">
    <molecule id="O75061-4"/>
    <property type="protein sequence ID" value="ENSP00000263441.7"/>
    <property type="gene ID" value="ENSG00000116675.16"/>
</dbReference>
<dbReference type="Ensembl" id="ENST00000371069.5">
    <molecule id="O75061-2"/>
    <property type="protein sequence ID" value="ENSP00000360108.4"/>
    <property type="gene ID" value="ENSG00000116675.16"/>
</dbReference>
<dbReference type="Ensembl" id="ENST00000395325.7">
    <molecule id="O75061-1"/>
    <property type="protein sequence ID" value="ENSP00000378735.3"/>
    <property type="gene ID" value="ENSG00000116675.16"/>
</dbReference>
<dbReference type="GeneID" id="9829"/>
<dbReference type="KEGG" id="hsa:9829"/>
<dbReference type="MANE-Select" id="ENST00000371069.5">
    <molecule id="O75061-2"/>
    <property type="protein sequence ID" value="ENSP00000360108.4"/>
    <property type="RefSeq nucleotide sequence ID" value="NM_001256864.2"/>
    <property type="RefSeq protein sequence ID" value="NP_001243793.1"/>
</dbReference>
<dbReference type="UCSC" id="uc001dcd.3">
    <molecule id="O75061-1"/>
    <property type="organism name" value="human"/>
</dbReference>
<dbReference type="AGR" id="HGNC:15469"/>
<dbReference type="CTD" id="9829"/>
<dbReference type="DisGeNET" id="9829"/>
<dbReference type="GeneCards" id="DNAJC6"/>
<dbReference type="GeneReviews" id="DNAJC6"/>
<dbReference type="HGNC" id="HGNC:15469">
    <property type="gene designation" value="DNAJC6"/>
</dbReference>
<dbReference type="HPA" id="ENSG00000116675">
    <property type="expression patterns" value="Group enriched (brain, retina)"/>
</dbReference>
<dbReference type="MalaCards" id="DNAJC6"/>
<dbReference type="MIM" id="608375">
    <property type="type" value="gene"/>
</dbReference>
<dbReference type="MIM" id="615528">
    <property type="type" value="phenotype"/>
</dbReference>
<dbReference type="neXtProt" id="NX_O75061"/>
<dbReference type="OpenTargets" id="ENSG00000116675"/>
<dbReference type="Orphanet" id="391411">
    <property type="disease" value="Atypical juvenile parkinsonism"/>
</dbReference>
<dbReference type="Orphanet" id="2828">
    <property type="disease" value="Young-onset Parkinson disease"/>
</dbReference>
<dbReference type="PharmGKB" id="PA27423"/>
<dbReference type="VEuPathDB" id="HostDB:ENSG00000116675"/>
<dbReference type="eggNOG" id="KOG0431">
    <property type="taxonomic scope" value="Eukaryota"/>
</dbReference>
<dbReference type="eggNOG" id="KOG2283">
    <property type="taxonomic scope" value="Eukaryota"/>
</dbReference>
<dbReference type="GeneTree" id="ENSGT00940000158755"/>
<dbReference type="HOGENOM" id="CLU_007537_1_0_1"/>
<dbReference type="InParanoid" id="O75061"/>
<dbReference type="OMA" id="XPELDAC"/>
<dbReference type="OrthoDB" id="1717591at2759"/>
<dbReference type="PAN-GO" id="O75061">
    <property type="GO annotations" value="7 GO annotations based on evolutionary models"/>
</dbReference>
<dbReference type="PhylomeDB" id="O75061"/>
<dbReference type="TreeFam" id="TF105165"/>
<dbReference type="PathwayCommons" id="O75061"/>
<dbReference type="Reactome" id="R-HSA-432720">
    <property type="pathway name" value="Lysosome Vesicle Biogenesis"/>
</dbReference>
<dbReference type="Reactome" id="R-HSA-432722">
    <property type="pathway name" value="Golgi Associated Vesicle Biogenesis"/>
</dbReference>
<dbReference type="Reactome" id="R-HSA-8856828">
    <property type="pathway name" value="Clathrin-mediated endocytosis"/>
</dbReference>
<dbReference type="SignaLink" id="O75061"/>
<dbReference type="SIGNOR" id="O75061"/>
<dbReference type="BioGRID-ORCS" id="9829">
    <property type="hits" value="12 hits in 1157 CRISPR screens"/>
</dbReference>
<dbReference type="CD-CODE" id="FB4E32DD">
    <property type="entry name" value="Presynaptic clusters and postsynaptic densities"/>
</dbReference>
<dbReference type="ChiTaRS" id="DNAJC6">
    <property type="organism name" value="human"/>
</dbReference>
<dbReference type="GeneWiki" id="Auxilin"/>
<dbReference type="GenomeRNAi" id="9829"/>
<dbReference type="Pharos" id="O75061">
    <property type="development level" value="Tbio"/>
</dbReference>
<dbReference type="PRO" id="PR:O75061"/>
<dbReference type="Proteomes" id="UP000005640">
    <property type="component" value="Chromosome 1"/>
</dbReference>
<dbReference type="RNAct" id="O75061">
    <property type="molecule type" value="protein"/>
</dbReference>
<dbReference type="Bgee" id="ENSG00000116675">
    <property type="expression patterns" value="Expressed in endothelial cell and 153 other cell types or tissues"/>
</dbReference>
<dbReference type="ExpressionAtlas" id="O75061">
    <property type="expression patterns" value="baseline and differential"/>
</dbReference>
<dbReference type="GO" id="GO:0030136">
    <property type="term" value="C:clathrin-coated vesicle"/>
    <property type="evidence" value="ECO:0000250"/>
    <property type="project" value="UniProtKB"/>
</dbReference>
<dbReference type="GO" id="GO:0005829">
    <property type="term" value="C:cytosol"/>
    <property type="evidence" value="ECO:0000304"/>
    <property type="project" value="Reactome"/>
</dbReference>
<dbReference type="GO" id="GO:0098894">
    <property type="term" value="C:extrinsic component of presynaptic endocytic zone membrane"/>
    <property type="evidence" value="ECO:0007669"/>
    <property type="project" value="Ensembl"/>
</dbReference>
<dbReference type="GO" id="GO:0043231">
    <property type="term" value="C:intracellular membrane-bounded organelle"/>
    <property type="evidence" value="ECO:0000318"/>
    <property type="project" value="GO_Central"/>
</dbReference>
<dbReference type="GO" id="GO:0014069">
    <property type="term" value="C:postsynaptic density"/>
    <property type="evidence" value="ECO:0000318"/>
    <property type="project" value="GO_Central"/>
</dbReference>
<dbReference type="GO" id="GO:0031982">
    <property type="term" value="C:vesicle"/>
    <property type="evidence" value="ECO:0000318"/>
    <property type="project" value="GO_Central"/>
</dbReference>
<dbReference type="GO" id="GO:0030276">
    <property type="term" value="F:clathrin binding"/>
    <property type="evidence" value="ECO:0000250"/>
    <property type="project" value="UniProtKB"/>
</dbReference>
<dbReference type="GO" id="GO:0032050">
    <property type="term" value="F:clathrin heavy chain binding"/>
    <property type="evidence" value="ECO:0000250"/>
    <property type="project" value="UniProtKB"/>
</dbReference>
<dbReference type="GO" id="GO:0031072">
    <property type="term" value="F:heat shock protein binding"/>
    <property type="evidence" value="ECO:0000250"/>
    <property type="project" value="UniProtKB"/>
</dbReference>
<dbReference type="GO" id="GO:0004725">
    <property type="term" value="F:protein tyrosine phosphatase activity"/>
    <property type="evidence" value="ECO:0007669"/>
    <property type="project" value="UniProtKB-EC"/>
</dbReference>
<dbReference type="GO" id="GO:0017124">
    <property type="term" value="F:SH3 domain binding"/>
    <property type="evidence" value="ECO:0007669"/>
    <property type="project" value="UniProtKB-KW"/>
</dbReference>
<dbReference type="GO" id="GO:0072318">
    <property type="term" value="P:clathrin coat disassembly"/>
    <property type="evidence" value="ECO:0000250"/>
    <property type="project" value="UniProtKB"/>
</dbReference>
<dbReference type="GO" id="GO:0072583">
    <property type="term" value="P:clathrin-dependent endocytosis"/>
    <property type="evidence" value="ECO:0000315"/>
    <property type="project" value="UniProtKB"/>
</dbReference>
<dbReference type="GO" id="GO:0046907">
    <property type="term" value="P:intracellular transport"/>
    <property type="evidence" value="ECO:0000315"/>
    <property type="project" value="UniProtKB"/>
</dbReference>
<dbReference type="GO" id="GO:1905443">
    <property type="term" value="P:regulation of clathrin coat assembly"/>
    <property type="evidence" value="ECO:0000315"/>
    <property type="project" value="UniProtKB"/>
</dbReference>
<dbReference type="GO" id="GO:2000369">
    <property type="term" value="P:regulation of clathrin-dependent endocytosis"/>
    <property type="evidence" value="ECO:0007669"/>
    <property type="project" value="Ensembl"/>
</dbReference>
<dbReference type="GO" id="GO:0036465">
    <property type="term" value="P:synaptic vesicle recycling"/>
    <property type="evidence" value="ECO:0000250"/>
    <property type="project" value="UniProtKB"/>
</dbReference>
<dbReference type="GO" id="GO:0016191">
    <property type="term" value="P:synaptic vesicle uncoating"/>
    <property type="evidence" value="ECO:0000250"/>
    <property type="project" value="BHF-UCL"/>
</dbReference>
<dbReference type="CDD" id="cd06257">
    <property type="entry name" value="DnaJ"/>
    <property type="match status" value="1"/>
</dbReference>
<dbReference type="CDD" id="cd14563">
    <property type="entry name" value="PTP_auxilin_N"/>
    <property type="match status" value="1"/>
</dbReference>
<dbReference type="FunFam" id="2.60.40.1110:FF:000001">
    <property type="entry name" value="cyclin-G-associated kinase isoform X2"/>
    <property type="match status" value="1"/>
</dbReference>
<dbReference type="FunFam" id="3.90.190.10:FF:000255">
    <property type="entry name" value="putative tyrosine-protein phosphatase auxilin"/>
    <property type="match status" value="1"/>
</dbReference>
<dbReference type="FunFam" id="1.10.287.110:FF:000002">
    <property type="entry name" value="putative tyrosine-protein phosphatase auxilin isoform X2"/>
    <property type="match status" value="1"/>
</dbReference>
<dbReference type="Gene3D" id="2.60.40.1110">
    <property type="match status" value="1"/>
</dbReference>
<dbReference type="Gene3D" id="1.10.287.110">
    <property type="entry name" value="DnaJ domain"/>
    <property type="match status" value="1"/>
</dbReference>
<dbReference type="Gene3D" id="3.90.190.10">
    <property type="entry name" value="Protein tyrosine phosphatase superfamily"/>
    <property type="match status" value="1"/>
</dbReference>
<dbReference type="InterPro" id="IPR035892">
    <property type="entry name" value="C2_domain_sf"/>
</dbReference>
<dbReference type="InterPro" id="IPR001623">
    <property type="entry name" value="DnaJ_domain"/>
</dbReference>
<dbReference type="InterPro" id="IPR036869">
    <property type="entry name" value="J_dom_sf"/>
</dbReference>
<dbReference type="InterPro" id="IPR029021">
    <property type="entry name" value="Prot-tyrosine_phosphatase-like"/>
</dbReference>
<dbReference type="InterPro" id="IPR014020">
    <property type="entry name" value="Tensin_C2-dom"/>
</dbReference>
<dbReference type="InterPro" id="IPR029023">
    <property type="entry name" value="Tensin_phosphatase"/>
</dbReference>
<dbReference type="InterPro" id="IPR000387">
    <property type="entry name" value="Tyr_Pase_dom"/>
</dbReference>
<dbReference type="PANTHER" id="PTHR23172">
    <property type="entry name" value="AUXILIN/CYCLIN G-ASSOCIATED KINASE-RELATED"/>
    <property type="match status" value="1"/>
</dbReference>
<dbReference type="PANTHER" id="PTHR23172:SF4">
    <property type="entry name" value="TYROSINE-PROTEIN PHOSPHATASE AUXILIN-RELATED"/>
    <property type="match status" value="1"/>
</dbReference>
<dbReference type="Pfam" id="PF10409">
    <property type="entry name" value="PTEN_C2"/>
    <property type="match status" value="1"/>
</dbReference>
<dbReference type="SMART" id="SM00271">
    <property type="entry name" value="DnaJ"/>
    <property type="match status" value="1"/>
</dbReference>
<dbReference type="SMART" id="SM01326">
    <property type="entry name" value="PTEN_C2"/>
    <property type="match status" value="1"/>
</dbReference>
<dbReference type="SUPFAM" id="SSF52799">
    <property type="entry name" value="(Phosphotyrosine protein) phosphatases II"/>
    <property type="match status" value="1"/>
</dbReference>
<dbReference type="SUPFAM" id="SSF49562">
    <property type="entry name" value="C2 domain (Calcium/lipid-binding domain, CaLB)"/>
    <property type="match status" value="1"/>
</dbReference>
<dbReference type="SUPFAM" id="SSF46565">
    <property type="entry name" value="Chaperone J-domain"/>
    <property type="match status" value="1"/>
</dbReference>
<dbReference type="PROSITE" id="PS51182">
    <property type="entry name" value="C2_TENSIN"/>
    <property type="match status" value="1"/>
</dbReference>
<dbReference type="PROSITE" id="PS50076">
    <property type="entry name" value="DNAJ_2"/>
    <property type="match status" value="1"/>
</dbReference>
<dbReference type="PROSITE" id="PS51181">
    <property type="entry name" value="PPASE_TENSIN"/>
    <property type="match status" value="1"/>
</dbReference>
<dbReference type="PROSITE" id="PS50056">
    <property type="entry name" value="TYR_PHOSPHATASE_2"/>
    <property type="match status" value="1"/>
</dbReference>
<feature type="chain" id="PRO_0000244516" description="Auxilin">
    <location>
        <begin position="1"/>
        <end position="913"/>
    </location>
</feature>
<feature type="repeat" description="1">
    <location>
        <begin position="36"/>
        <end position="39"/>
    </location>
</feature>
<feature type="repeat" description="2">
    <location>
        <begin position="40"/>
        <end position="43"/>
    </location>
</feature>
<feature type="repeat" description="3">
    <location>
        <begin position="44"/>
        <end position="47"/>
    </location>
</feature>
<feature type="domain" description="Phosphatase tensin-type" evidence="6">
    <location>
        <begin position="55"/>
        <end position="222"/>
    </location>
</feature>
<feature type="domain" description="C2 tensin-type" evidence="5">
    <location>
        <begin position="228"/>
        <end position="366"/>
    </location>
</feature>
<feature type="domain" description="J" evidence="4">
    <location>
        <begin position="849"/>
        <end position="913"/>
    </location>
</feature>
<feature type="region of interest" description="3 X 4 AA approximate tandem repeats">
    <location>
        <begin position="36"/>
        <end position="47"/>
    </location>
</feature>
<feature type="region of interest" description="Disordered" evidence="7">
    <location>
        <begin position="451"/>
        <end position="776"/>
    </location>
</feature>
<feature type="short sequence motif" description="SH3-binding" evidence="3">
    <location>
        <begin position="409"/>
        <end position="417"/>
    </location>
</feature>
<feature type="compositionally biased region" description="Polar residues" evidence="7">
    <location>
        <begin position="506"/>
        <end position="523"/>
    </location>
</feature>
<feature type="compositionally biased region" description="Low complexity" evidence="7">
    <location>
        <begin position="554"/>
        <end position="572"/>
    </location>
</feature>
<feature type="compositionally biased region" description="Polar residues" evidence="7">
    <location>
        <begin position="599"/>
        <end position="629"/>
    </location>
</feature>
<feature type="compositionally biased region" description="Low complexity" evidence="7">
    <location>
        <begin position="654"/>
        <end position="669"/>
    </location>
</feature>
<feature type="active site" description="Phosphocysteine intermediate" evidence="6">
    <location>
        <position position="164"/>
    </location>
</feature>
<feature type="modified residue" description="Phosphoserine" evidence="22">
    <location>
        <position position="112"/>
    </location>
</feature>
<feature type="modified residue" description="Phosphoserine" evidence="2">
    <location>
        <position position="453"/>
    </location>
</feature>
<feature type="modified residue" description="Phosphoserine" evidence="2">
    <location>
        <position position="456"/>
    </location>
</feature>
<feature type="modified residue" description="Phosphoserine" evidence="20">
    <location>
        <position position="563"/>
    </location>
</feature>
<feature type="modified residue" description="Phosphoserine" evidence="13 20 22">
    <location>
        <position position="570"/>
    </location>
</feature>
<feature type="splice variant" id="VSP_019579" description="In isoform 3 and isoform 4." evidence="14 15">
    <location>
        <begin position="1"/>
        <end position="13"/>
    </location>
</feature>
<feature type="splice variant" id="VSP_019580" description="In isoform 2." evidence="15">
    <original>MKDSENK</original>
    <variation>MSLLGSYRKKTSNDGYESLQLVDSNGDLSAGSGGVGGKQRVNAGAAARSPARQPPDRASTMDSS</variation>
    <location>
        <begin position="1"/>
        <end position="7"/>
    </location>
</feature>
<feature type="splice variant" id="VSP_019581" description="In isoform 3." evidence="15">
    <location>
        <begin position="456"/>
        <end position="913"/>
    </location>
</feature>
<feature type="sequence variant" id="VAR_077924" description="In dbSNP:rs61757223." evidence="11">
    <original>M</original>
    <variation>L</variation>
    <location>
        <position position="76"/>
    </location>
</feature>
<feature type="sequence variant" id="VAR_077925" evidence="11">
    <original>L</original>
    <variation>P</variation>
    <location>
        <position position="152"/>
    </location>
</feature>
<feature type="sequence variant" id="VAR_077926" evidence="11">
    <original>I</original>
    <variation>V</variation>
    <location>
        <position position="264"/>
    </location>
</feature>
<feature type="sequence variant" id="VAR_077927" description="In dbSNP:rs145329294." evidence="11">
    <original>C</original>
    <variation>S</variation>
    <location>
        <position position="441"/>
    </location>
</feature>
<feature type="sequence variant" id="VAR_077928" description="In dbSNP:rs770127313." evidence="11">
    <original>R</original>
    <variation>C</variation>
    <location>
        <position position="562"/>
    </location>
</feature>
<feature type="sequence variant" id="VAR_026908" description="In dbSNP:rs4915691.">
    <original>S</original>
    <variation>N</variation>
    <location>
        <position position="671"/>
    </location>
</feature>
<feature type="sequence variant" id="VAR_077929" description="In PARK19B; patient fibroblasts show decreased levels of the protein; dbSNP:rs879255630." evidence="11">
    <original>R</original>
    <variation>G</variation>
    <location>
        <position position="870"/>
    </location>
</feature>
<feature type="mutagenesis site" description="Increase interaction with CLTC. Does not affect interaction with HSPA8." evidence="13">
    <original>S</original>
    <variation>A</variation>
    <location>
        <position position="570"/>
    </location>
</feature>
<feature type="mutagenesis site" description="Does not affect interaction with CLTC. Does not affect interaction with HSPA8." evidence="13">
    <original>S</original>
    <variation>D</variation>
    <location>
        <position position="570"/>
    </location>
</feature>
<feature type="sequence conflict" description="In Ref. 2; BAH12344." evidence="17" ref="2">
    <original>M</original>
    <variation>V</variation>
    <location>
        <position position="178"/>
    </location>
</feature>
<feature type="sequence conflict" description="In Ref. 5; AAH51722." evidence="17" ref="5">
    <original>F</original>
    <variation>S</variation>
    <location>
        <position position="425"/>
    </location>
</feature>
<feature type="modified residue" description="N-acetylmethionine" evidence="21">
    <location sequence="O75061-3">
        <position position="1"/>
    </location>
</feature>
<feature type="modified residue" description="N-acetylmethionine" evidence="21">
    <location sequence="O75061-4">
        <position position="1"/>
    </location>
</feature>